<accession>Q5RBM7</accession>
<proteinExistence type="evidence at transcript level"/>
<dbReference type="EMBL" id="CR858611">
    <property type="protein sequence ID" value="CAH90833.1"/>
    <property type="molecule type" value="mRNA"/>
</dbReference>
<dbReference type="RefSeq" id="NP_001125475.1">
    <property type="nucleotide sequence ID" value="NM_001132003.1"/>
</dbReference>
<dbReference type="RefSeq" id="XP_054382326.1">
    <property type="nucleotide sequence ID" value="XM_054526351.1"/>
</dbReference>
<dbReference type="SMR" id="Q5RBM7"/>
<dbReference type="FunCoup" id="Q5RBM7">
    <property type="interactions" value="259"/>
</dbReference>
<dbReference type="STRING" id="9601.ENSPPYP00000004813"/>
<dbReference type="Ensembl" id="ENSPPYT00000036887.1">
    <property type="protein sequence ID" value="ENSPPYP00000033594.1"/>
    <property type="gene ID" value="ENSPPYG00000032813.1"/>
</dbReference>
<dbReference type="GeneID" id="100172384"/>
<dbReference type="KEGG" id="pon:100172384"/>
<dbReference type="CTD" id="83758"/>
<dbReference type="eggNOG" id="KOG4015">
    <property type="taxonomic scope" value="Eukaryota"/>
</dbReference>
<dbReference type="GeneTree" id="ENSGT00940000162526"/>
<dbReference type="InParanoid" id="Q5RBM7"/>
<dbReference type="OMA" id="NINMALR"/>
<dbReference type="OrthoDB" id="354351at2759"/>
<dbReference type="Proteomes" id="UP000001595">
    <property type="component" value="Chromosome 12"/>
</dbReference>
<dbReference type="GO" id="GO:0005737">
    <property type="term" value="C:cytoplasm"/>
    <property type="evidence" value="ECO:0007669"/>
    <property type="project" value="UniProtKB-SubCell"/>
</dbReference>
<dbReference type="GO" id="GO:0016918">
    <property type="term" value="F:retinal binding"/>
    <property type="evidence" value="ECO:0007669"/>
    <property type="project" value="UniProtKB-KW"/>
</dbReference>
<dbReference type="GO" id="GO:0019841">
    <property type="term" value="F:retinol binding"/>
    <property type="evidence" value="ECO:0007669"/>
    <property type="project" value="UniProtKB-KW"/>
</dbReference>
<dbReference type="CDD" id="cd19464">
    <property type="entry name" value="CRBP3"/>
    <property type="match status" value="1"/>
</dbReference>
<dbReference type="FunFam" id="2.40.128.20:FF:000001">
    <property type="entry name" value="Fatty acid-binding protein, adipocyte"/>
    <property type="match status" value="1"/>
</dbReference>
<dbReference type="Gene3D" id="2.40.128.20">
    <property type="match status" value="1"/>
</dbReference>
<dbReference type="InterPro" id="IPR012674">
    <property type="entry name" value="Calycin"/>
</dbReference>
<dbReference type="InterPro" id="IPR000463">
    <property type="entry name" value="Fatty_acid-bd"/>
</dbReference>
<dbReference type="InterPro" id="IPR031259">
    <property type="entry name" value="ILBP"/>
</dbReference>
<dbReference type="InterPro" id="IPR000566">
    <property type="entry name" value="Lipocln_cytosolic_FA-bd_dom"/>
</dbReference>
<dbReference type="PANTHER" id="PTHR11955">
    <property type="entry name" value="FATTY ACID BINDING PROTEIN"/>
    <property type="match status" value="1"/>
</dbReference>
<dbReference type="Pfam" id="PF00061">
    <property type="entry name" value="Lipocalin"/>
    <property type="match status" value="1"/>
</dbReference>
<dbReference type="PRINTS" id="PR00178">
    <property type="entry name" value="FATTYACIDBP"/>
</dbReference>
<dbReference type="SUPFAM" id="SSF50814">
    <property type="entry name" value="Lipocalins"/>
    <property type="match status" value="1"/>
</dbReference>
<keyword id="KW-0963">Cytoplasm</keyword>
<keyword id="KW-1185">Reference proteome</keyword>
<keyword id="KW-0683">Retinol-binding</keyword>
<keyword id="KW-0813">Transport</keyword>
<keyword id="KW-0845">Vitamin A</keyword>
<evidence type="ECO:0000250" key="1"/>
<evidence type="ECO:0000305" key="2"/>
<reference key="1">
    <citation type="submission" date="2004-11" db="EMBL/GenBank/DDBJ databases">
        <authorList>
            <consortium name="The German cDNA consortium"/>
        </authorList>
    </citation>
    <scope>NUCLEOTIDE SEQUENCE [LARGE SCALE MRNA]</scope>
    <source>
        <tissue>Kidney</tissue>
    </source>
</reference>
<gene>
    <name type="primary">RBP5</name>
</gene>
<comment type="function">
    <text evidence="1">Intracellular transport of retinol.</text>
</comment>
<comment type="subcellular location">
    <subcellularLocation>
        <location evidence="1">Cytoplasm</location>
    </subcellularLocation>
</comment>
<comment type="domain">
    <text evidence="1">Forms a beta-barrel structure that accommodates hydrophobic ligands in its interior.</text>
</comment>
<comment type="similarity">
    <text evidence="2">Belongs to the calycin superfamily. Fatty-acid binding protein (FABP) family.</text>
</comment>
<protein>
    <recommendedName>
        <fullName>Retinol-binding protein 5</fullName>
    </recommendedName>
    <alternativeName>
        <fullName>Cellular retinol-binding protein III</fullName>
        <shortName>CRBP-III</shortName>
    </alternativeName>
</protein>
<sequence>MPPNLTGYYRFVSQKNMEDYLQALNISLAVRKIALLLKPDKEIDHQGNHMMVRTLSTFRNYTVQFDVGVEFEEDLRSVDGRKCQTIVTWEEEQLVCVQKGEVPNRGWRHWLEGEMLYLELTARDAVCEQVFRKVR</sequence>
<feature type="chain" id="PRO_0000067401" description="Retinol-binding protein 5">
    <location>
        <begin position="1"/>
        <end position="135"/>
    </location>
</feature>
<name>RET5_PONAB</name>
<organism>
    <name type="scientific">Pongo abelii</name>
    <name type="common">Sumatran orangutan</name>
    <name type="synonym">Pongo pygmaeus abelii</name>
    <dbReference type="NCBI Taxonomy" id="9601"/>
    <lineage>
        <taxon>Eukaryota</taxon>
        <taxon>Metazoa</taxon>
        <taxon>Chordata</taxon>
        <taxon>Craniata</taxon>
        <taxon>Vertebrata</taxon>
        <taxon>Euteleostomi</taxon>
        <taxon>Mammalia</taxon>
        <taxon>Eutheria</taxon>
        <taxon>Euarchontoglires</taxon>
        <taxon>Primates</taxon>
        <taxon>Haplorrhini</taxon>
        <taxon>Catarrhini</taxon>
        <taxon>Hominidae</taxon>
        <taxon>Pongo</taxon>
    </lineage>
</organism>